<protein>
    <recommendedName>
        <fullName evidence="1">5'-methylthioadenosine/S-adenosylhomocysteine nucleosidase</fullName>
        <shortName evidence="1">MTA/SAH nucleosidase</shortName>
        <shortName evidence="1">MTAN</shortName>
        <ecNumber evidence="1">3.2.2.9</ecNumber>
    </recommendedName>
    <alternativeName>
        <fullName evidence="1">5'-deoxyadenosine nucleosidase</fullName>
        <shortName evidence="1">DOA nucleosidase</shortName>
        <shortName evidence="1">dAdo nucleosidase</shortName>
    </alternativeName>
    <alternativeName>
        <fullName evidence="1">5'-methylthioadenosine nucleosidase</fullName>
        <shortName evidence="1">MTA nucleosidase</shortName>
    </alternativeName>
    <alternativeName>
        <fullName evidence="1">S-adenosylhomocysteine nucleosidase</fullName>
        <shortName evidence="1">AdoHcy nucleosidase</shortName>
        <shortName evidence="1">SAH nucleosidase</shortName>
        <shortName evidence="1">SRH nucleosidase</shortName>
    </alternativeName>
</protein>
<dbReference type="EC" id="3.2.2.9" evidence="1"/>
<dbReference type="EMBL" id="AM286415">
    <property type="protein sequence ID" value="CAL10843.1"/>
    <property type="molecule type" value="Genomic_DNA"/>
</dbReference>
<dbReference type="RefSeq" id="WP_005167232.1">
    <property type="nucleotide sequence ID" value="NC_008800.1"/>
</dbReference>
<dbReference type="RefSeq" id="YP_001005083.1">
    <property type="nucleotide sequence ID" value="NC_008800.1"/>
</dbReference>
<dbReference type="SMR" id="A1JJQ6"/>
<dbReference type="KEGG" id="yen:YE0739"/>
<dbReference type="PATRIC" id="fig|393305.7.peg.834"/>
<dbReference type="eggNOG" id="COG0775">
    <property type="taxonomic scope" value="Bacteria"/>
</dbReference>
<dbReference type="HOGENOM" id="CLU_031248_2_2_6"/>
<dbReference type="OrthoDB" id="9792278at2"/>
<dbReference type="UniPathway" id="UPA00904">
    <property type="reaction ID" value="UER00871"/>
</dbReference>
<dbReference type="Proteomes" id="UP000000642">
    <property type="component" value="Chromosome"/>
</dbReference>
<dbReference type="GO" id="GO:0005829">
    <property type="term" value="C:cytosol"/>
    <property type="evidence" value="ECO:0007669"/>
    <property type="project" value="TreeGrafter"/>
</dbReference>
<dbReference type="GO" id="GO:0008782">
    <property type="term" value="F:adenosylhomocysteine nucleosidase activity"/>
    <property type="evidence" value="ECO:0007669"/>
    <property type="project" value="UniProtKB-UniRule"/>
</dbReference>
<dbReference type="GO" id="GO:0008930">
    <property type="term" value="F:methylthioadenosine nucleosidase activity"/>
    <property type="evidence" value="ECO:0007669"/>
    <property type="project" value="UniProtKB-UniRule"/>
</dbReference>
<dbReference type="GO" id="GO:0019509">
    <property type="term" value="P:L-methionine salvage from methylthioadenosine"/>
    <property type="evidence" value="ECO:0007669"/>
    <property type="project" value="UniProtKB-UniRule"/>
</dbReference>
<dbReference type="GO" id="GO:0019284">
    <property type="term" value="P:L-methionine salvage from S-adenosylmethionine"/>
    <property type="evidence" value="ECO:0007669"/>
    <property type="project" value="TreeGrafter"/>
</dbReference>
<dbReference type="GO" id="GO:0046124">
    <property type="term" value="P:purine deoxyribonucleoside catabolic process"/>
    <property type="evidence" value="ECO:0007669"/>
    <property type="project" value="UniProtKB-UniRule"/>
</dbReference>
<dbReference type="CDD" id="cd09008">
    <property type="entry name" value="MTAN"/>
    <property type="match status" value="1"/>
</dbReference>
<dbReference type="FunFam" id="3.40.50.1580:FF:000001">
    <property type="entry name" value="MTA/SAH nucleosidase family protein"/>
    <property type="match status" value="1"/>
</dbReference>
<dbReference type="Gene3D" id="3.40.50.1580">
    <property type="entry name" value="Nucleoside phosphorylase domain"/>
    <property type="match status" value="1"/>
</dbReference>
<dbReference type="HAMAP" id="MF_01684">
    <property type="entry name" value="Salvage_MtnN"/>
    <property type="match status" value="1"/>
</dbReference>
<dbReference type="InterPro" id="IPR010049">
    <property type="entry name" value="MTA_SAH_Nsdase"/>
</dbReference>
<dbReference type="InterPro" id="IPR000845">
    <property type="entry name" value="Nucleoside_phosphorylase_d"/>
</dbReference>
<dbReference type="InterPro" id="IPR035994">
    <property type="entry name" value="Nucleoside_phosphorylase_sf"/>
</dbReference>
<dbReference type="NCBIfam" id="TIGR01704">
    <property type="entry name" value="MTA_SAH-Nsdase"/>
    <property type="match status" value="1"/>
</dbReference>
<dbReference type="NCBIfam" id="NF004079">
    <property type="entry name" value="PRK05584.1"/>
    <property type="match status" value="1"/>
</dbReference>
<dbReference type="PANTHER" id="PTHR46832">
    <property type="entry name" value="5'-METHYLTHIOADENOSINE/S-ADENOSYLHOMOCYSTEINE NUCLEOSIDASE"/>
    <property type="match status" value="1"/>
</dbReference>
<dbReference type="PANTHER" id="PTHR46832:SF1">
    <property type="entry name" value="5'-METHYLTHIOADENOSINE_S-ADENOSYLHOMOCYSTEINE NUCLEOSIDASE"/>
    <property type="match status" value="1"/>
</dbReference>
<dbReference type="Pfam" id="PF01048">
    <property type="entry name" value="PNP_UDP_1"/>
    <property type="match status" value="1"/>
</dbReference>
<dbReference type="SUPFAM" id="SSF53167">
    <property type="entry name" value="Purine and uridine phosphorylases"/>
    <property type="match status" value="1"/>
</dbReference>
<feature type="chain" id="PRO_0000359390" description="5'-methylthioadenosine/S-adenosylhomocysteine nucleosidase">
    <location>
        <begin position="1"/>
        <end position="233"/>
    </location>
</feature>
<feature type="active site" description="Proton acceptor" evidence="1">
    <location>
        <position position="12"/>
    </location>
</feature>
<feature type="active site" description="Proton donor" evidence="1">
    <location>
        <position position="197"/>
    </location>
</feature>
<feature type="binding site" evidence="1">
    <location>
        <position position="78"/>
    </location>
    <ligand>
        <name>substrate</name>
    </ligand>
</feature>
<feature type="binding site" evidence="1">
    <location>
        <position position="152"/>
    </location>
    <ligand>
        <name>substrate</name>
    </ligand>
</feature>
<feature type="binding site" evidence="1">
    <location>
        <begin position="173"/>
        <end position="174"/>
    </location>
    <ligand>
        <name>substrate</name>
    </ligand>
</feature>
<proteinExistence type="inferred from homology"/>
<accession>A1JJQ6</accession>
<keyword id="KW-0028">Amino-acid biosynthesis</keyword>
<keyword id="KW-0378">Hydrolase</keyword>
<keyword id="KW-0486">Methionine biosynthesis</keyword>
<sequence length="233" mass="24619">MKVGIIGAMEEEVTLLRDKIENRQTLSRAGCEIYTGQLNGIDVALLKSGIGKVSAAMGTTLLLEHCQPDIVINTGSAGGLASSLKVGDIVVSTEVRYHDADVTAFGYEPGQMAGCPAAFIADLKLIELAESCIKQLDLNAVRGLICSGDAFINGAAPLARIRTTFPSVAAVEMEAAAIGHVCYLFKTPFVVVRAISDVADQESHLSFDEFLVVAAKQSTLMIEAMLTSLAKRG</sequence>
<reference key="1">
    <citation type="journal article" date="2006" name="PLoS Genet.">
        <title>The complete genome sequence and comparative genome analysis of the high pathogenicity Yersinia enterocolitica strain 8081.</title>
        <authorList>
            <person name="Thomson N.R."/>
            <person name="Howard S."/>
            <person name="Wren B.W."/>
            <person name="Holden M.T.G."/>
            <person name="Crossman L."/>
            <person name="Challis G.L."/>
            <person name="Churcher C."/>
            <person name="Mungall K."/>
            <person name="Brooks K."/>
            <person name="Chillingworth T."/>
            <person name="Feltwell T."/>
            <person name="Abdellah Z."/>
            <person name="Hauser H."/>
            <person name="Jagels K."/>
            <person name="Maddison M."/>
            <person name="Moule S."/>
            <person name="Sanders M."/>
            <person name="Whitehead S."/>
            <person name="Quail M.A."/>
            <person name="Dougan G."/>
            <person name="Parkhill J."/>
            <person name="Prentice M.B."/>
        </authorList>
    </citation>
    <scope>NUCLEOTIDE SEQUENCE [LARGE SCALE GENOMIC DNA]</scope>
    <source>
        <strain>NCTC 13174 / 8081</strain>
    </source>
</reference>
<name>MTNN_YERE8</name>
<evidence type="ECO:0000255" key="1">
    <source>
        <dbReference type="HAMAP-Rule" id="MF_01684"/>
    </source>
</evidence>
<comment type="function">
    <text evidence="1">Catalyzes the irreversible cleavage of the glycosidic bond in both 5'-methylthioadenosine (MTA) and S-adenosylhomocysteine (SAH/AdoHcy) to adenine and the corresponding thioribose, 5'-methylthioribose and S-ribosylhomocysteine, respectively. Also cleaves 5'-deoxyadenosine, a toxic by-product of radical S-adenosylmethionine (SAM) enzymes, into 5-deoxyribose and adenine. Thus, is required for in vivo function of the radical SAM enzymes biotin synthase and lipoic acid synthase, that are inhibited by 5'-deoxyadenosine accumulation.</text>
</comment>
<comment type="catalytic activity">
    <reaction evidence="1">
        <text>S-adenosyl-L-homocysteine + H2O = S-(5-deoxy-D-ribos-5-yl)-L-homocysteine + adenine</text>
        <dbReference type="Rhea" id="RHEA:17805"/>
        <dbReference type="ChEBI" id="CHEBI:15377"/>
        <dbReference type="ChEBI" id="CHEBI:16708"/>
        <dbReference type="ChEBI" id="CHEBI:57856"/>
        <dbReference type="ChEBI" id="CHEBI:58195"/>
        <dbReference type="EC" id="3.2.2.9"/>
    </reaction>
</comment>
<comment type="catalytic activity">
    <reaction evidence="1">
        <text>S-methyl-5'-thioadenosine + H2O = 5-(methylsulfanyl)-D-ribose + adenine</text>
        <dbReference type="Rhea" id="RHEA:13617"/>
        <dbReference type="ChEBI" id="CHEBI:15377"/>
        <dbReference type="ChEBI" id="CHEBI:16708"/>
        <dbReference type="ChEBI" id="CHEBI:17509"/>
        <dbReference type="ChEBI" id="CHEBI:78440"/>
        <dbReference type="EC" id="3.2.2.9"/>
    </reaction>
</comment>
<comment type="catalytic activity">
    <reaction evidence="1">
        <text>5'-deoxyadenosine + H2O = 5-deoxy-D-ribose + adenine</text>
        <dbReference type="Rhea" id="RHEA:29859"/>
        <dbReference type="ChEBI" id="CHEBI:15377"/>
        <dbReference type="ChEBI" id="CHEBI:16708"/>
        <dbReference type="ChEBI" id="CHEBI:17319"/>
        <dbReference type="ChEBI" id="CHEBI:149540"/>
        <dbReference type="EC" id="3.2.2.9"/>
    </reaction>
    <physiologicalReaction direction="left-to-right" evidence="1">
        <dbReference type="Rhea" id="RHEA:29860"/>
    </physiologicalReaction>
</comment>
<comment type="pathway">
    <text evidence="1">Amino-acid biosynthesis; L-methionine biosynthesis via salvage pathway; S-methyl-5-thio-alpha-D-ribose 1-phosphate from S-methyl-5'-thioadenosine (hydrolase route): step 1/2.</text>
</comment>
<comment type="subunit">
    <text evidence="1">Homodimer.</text>
</comment>
<comment type="similarity">
    <text evidence="1">Belongs to the PNP/UDP phosphorylase family. MtnN subfamily.</text>
</comment>
<gene>
    <name evidence="1" type="primary">mtnN</name>
    <name type="ordered locus">YE0739</name>
</gene>
<organism>
    <name type="scientific">Yersinia enterocolitica serotype O:8 / biotype 1B (strain NCTC 13174 / 8081)</name>
    <dbReference type="NCBI Taxonomy" id="393305"/>
    <lineage>
        <taxon>Bacteria</taxon>
        <taxon>Pseudomonadati</taxon>
        <taxon>Pseudomonadota</taxon>
        <taxon>Gammaproteobacteria</taxon>
        <taxon>Enterobacterales</taxon>
        <taxon>Yersiniaceae</taxon>
        <taxon>Yersinia</taxon>
    </lineage>
</organism>